<feature type="transit peptide" description="Mitochondrion" evidence="1">
    <location>
        <begin position="1"/>
        <end position="21"/>
    </location>
</feature>
<feature type="chain" id="PRO_0000413221" description="Glutamyl-tRNA(Gln) amidotransferase subunit B, mitochondrial">
    <location>
        <begin position="22"/>
        <end position="528"/>
    </location>
</feature>
<dbReference type="EC" id="6.3.5.-" evidence="1"/>
<dbReference type="EMBL" id="CH477622">
    <property type="protein sequence ID" value="EAT38175.1"/>
    <property type="molecule type" value="Genomic_DNA"/>
</dbReference>
<dbReference type="RefSeq" id="XP_001654104.1">
    <property type="nucleotide sequence ID" value="XM_001654054.1"/>
</dbReference>
<dbReference type="SMR" id="Q16UG2"/>
<dbReference type="FunCoup" id="Q16UG2">
    <property type="interactions" value="1029"/>
</dbReference>
<dbReference type="STRING" id="7159.Q16UG2"/>
<dbReference type="PaxDb" id="7159-AAEL009908-PA"/>
<dbReference type="GeneID" id="5572590"/>
<dbReference type="KEGG" id="aag:5572590"/>
<dbReference type="CTD" id="5188"/>
<dbReference type="VEuPathDB" id="VectorBase:AAEL009908"/>
<dbReference type="eggNOG" id="KOG2438">
    <property type="taxonomic scope" value="Eukaryota"/>
</dbReference>
<dbReference type="HOGENOM" id="CLU_019240_1_1_1"/>
<dbReference type="InParanoid" id="Q16UG2"/>
<dbReference type="OMA" id="ARKWWMG"/>
<dbReference type="OrthoDB" id="1722066at2759"/>
<dbReference type="PhylomeDB" id="Q16UG2"/>
<dbReference type="Proteomes" id="UP000008820">
    <property type="component" value="Unassembled WGS sequence"/>
</dbReference>
<dbReference type="Proteomes" id="UP000682892">
    <property type="component" value="Unassembled WGS sequence"/>
</dbReference>
<dbReference type="GO" id="GO:0030956">
    <property type="term" value="C:glutamyl-tRNA(Gln) amidotransferase complex"/>
    <property type="evidence" value="ECO:0007669"/>
    <property type="project" value="UniProtKB-UniRule"/>
</dbReference>
<dbReference type="GO" id="GO:0005739">
    <property type="term" value="C:mitochondrion"/>
    <property type="evidence" value="ECO:0007669"/>
    <property type="project" value="UniProtKB-SubCell"/>
</dbReference>
<dbReference type="GO" id="GO:0005524">
    <property type="term" value="F:ATP binding"/>
    <property type="evidence" value="ECO:0007669"/>
    <property type="project" value="UniProtKB-KW"/>
</dbReference>
<dbReference type="GO" id="GO:0050567">
    <property type="term" value="F:glutaminyl-tRNA synthase (glutamine-hydrolyzing) activity"/>
    <property type="evidence" value="ECO:0007669"/>
    <property type="project" value="UniProtKB-UniRule"/>
</dbReference>
<dbReference type="GO" id="GO:0070681">
    <property type="term" value="P:glutaminyl-tRNAGln biosynthesis via transamidation"/>
    <property type="evidence" value="ECO:0007669"/>
    <property type="project" value="UniProtKB-UniRule"/>
</dbReference>
<dbReference type="GO" id="GO:0032543">
    <property type="term" value="P:mitochondrial translation"/>
    <property type="evidence" value="ECO:0007669"/>
    <property type="project" value="UniProtKB-UniRule"/>
</dbReference>
<dbReference type="FunFam" id="1.10.10.410:FF:000001">
    <property type="entry name" value="Aspartyl/glutamyl-tRNA(Asn/Gln) amidotransferase subunit B"/>
    <property type="match status" value="1"/>
</dbReference>
<dbReference type="Gene3D" id="1.10.10.410">
    <property type="match status" value="1"/>
</dbReference>
<dbReference type="HAMAP" id="MF_00121">
    <property type="entry name" value="GatB"/>
    <property type="match status" value="1"/>
</dbReference>
<dbReference type="InterPro" id="IPR017959">
    <property type="entry name" value="Asn/Gln-tRNA_amidoTrfase_suB/E"/>
</dbReference>
<dbReference type="InterPro" id="IPR006075">
    <property type="entry name" value="Asn/Gln-tRNA_Trfase_suB/E_cat"/>
</dbReference>
<dbReference type="InterPro" id="IPR018027">
    <property type="entry name" value="Asn/Gln_amidotransferase"/>
</dbReference>
<dbReference type="InterPro" id="IPR003789">
    <property type="entry name" value="Asn/Gln_tRNA_amidoTrase-B-like"/>
</dbReference>
<dbReference type="InterPro" id="IPR004413">
    <property type="entry name" value="GatB"/>
</dbReference>
<dbReference type="InterPro" id="IPR023168">
    <property type="entry name" value="GatB_Yqey_C_2"/>
</dbReference>
<dbReference type="InterPro" id="IPR014746">
    <property type="entry name" value="Gln_synth/guanido_kin_cat_dom"/>
</dbReference>
<dbReference type="NCBIfam" id="TIGR00133">
    <property type="entry name" value="gatB"/>
    <property type="match status" value="1"/>
</dbReference>
<dbReference type="NCBIfam" id="NF004012">
    <property type="entry name" value="PRK05477.1-2"/>
    <property type="match status" value="1"/>
</dbReference>
<dbReference type="NCBIfam" id="NF004014">
    <property type="entry name" value="PRK05477.1-4"/>
    <property type="match status" value="1"/>
</dbReference>
<dbReference type="PANTHER" id="PTHR11659">
    <property type="entry name" value="GLUTAMYL-TRNA GLN AMIDOTRANSFERASE SUBUNIT B MITOCHONDRIAL AND PROKARYOTIC PET112-RELATED"/>
    <property type="match status" value="1"/>
</dbReference>
<dbReference type="PANTHER" id="PTHR11659:SF0">
    <property type="entry name" value="GLUTAMYL-TRNA(GLN) AMIDOTRANSFERASE SUBUNIT B, MITOCHONDRIAL"/>
    <property type="match status" value="1"/>
</dbReference>
<dbReference type="Pfam" id="PF02934">
    <property type="entry name" value="GatB_N"/>
    <property type="match status" value="1"/>
</dbReference>
<dbReference type="Pfam" id="PF02637">
    <property type="entry name" value="GatB_Yqey"/>
    <property type="match status" value="1"/>
</dbReference>
<dbReference type="SMART" id="SM00845">
    <property type="entry name" value="GatB_Yqey"/>
    <property type="match status" value="1"/>
</dbReference>
<dbReference type="SUPFAM" id="SSF89095">
    <property type="entry name" value="GatB/YqeY motif"/>
    <property type="match status" value="1"/>
</dbReference>
<dbReference type="SUPFAM" id="SSF55931">
    <property type="entry name" value="Glutamine synthetase/guanido kinase"/>
    <property type="match status" value="1"/>
</dbReference>
<name>GATB_AEDAE</name>
<reference key="1">
    <citation type="journal article" date="2007" name="Science">
        <title>Genome sequence of Aedes aegypti, a major arbovirus vector.</title>
        <authorList>
            <person name="Nene V."/>
            <person name="Wortman J.R."/>
            <person name="Lawson D."/>
            <person name="Haas B.J."/>
            <person name="Kodira C.D."/>
            <person name="Tu Z.J."/>
            <person name="Loftus B.J."/>
            <person name="Xi Z."/>
            <person name="Megy K."/>
            <person name="Grabherr M."/>
            <person name="Ren Q."/>
            <person name="Zdobnov E.M."/>
            <person name="Lobo N.F."/>
            <person name="Campbell K.S."/>
            <person name="Brown S.E."/>
            <person name="Bonaldo M.F."/>
            <person name="Zhu J."/>
            <person name="Sinkins S.P."/>
            <person name="Hogenkamp D.G."/>
            <person name="Amedeo P."/>
            <person name="Arensburger P."/>
            <person name="Atkinson P.W."/>
            <person name="Bidwell S.L."/>
            <person name="Biedler J."/>
            <person name="Birney E."/>
            <person name="Bruggner R.V."/>
            <person name="Costas J."/>
            <person name="Coy M.R."/>
            <person name="Crabtree J."/>
            <person name="Crawford M."/>
            <person name="DeBruyn B."/>
            <person name="DeCaprio D."/>
            <person name="Eiglmeier K."/>
            <person name="Eisenstadt E."/>
            <person name="El-Dorry H."/>
            <person name="Gelbart W.M."/>
            <person name="Gomes S.L."/>
            <person name="Hammond M."/>
            <person name="Hannick L.I."/>
            <person name="Hogan J.R."/>
            <person name="Holmes M.H."/>
            <person name="Jaffe D."/>
            <person name="Johnston S.J."/>
            <person name="Kennedy R.C."/>
            <person name="Koo H."/>
            <person name="Kravitz S."/>
            <person name="Kriventseva E.V."/>
            <person name="Kulp D."/>
            <person name="Labutti K."/>
            <person name="Lee E."/>
            <person name="Li S."/>
            <person name="Lovin D.D."/>
            <person name="Mao C."/>
            <person name="Mauceli E."/>
            <person name="Menck C.F."/>
            <person name="Miller J.R."/>
            <person name="Montgomery P."/>
            <person name="Mori A."/>
            <person name="Nascimento A.L."/>
            <person name="Naveira H.F."/>
            <person name="Nusbaum C."/>
            <person name="O'Leary S.B."/>
            <person name="Orvis J."/>
            <person name="Pertea M."/>
            <person name="Quesneville H."/>
            <person name="Reidenbach K.R."/>
            <person name="Rogers Y.-H.C."/>
            <person name="Roth C.W."/>
            <person name="Schneider J.R."/>
            <person name="Schatz M."/>
            <person name="Shumway M."/>
            <person name="Stanke M."/>
            <person name="Stinson E.O."/>
            <person name="Tubio J.M.C."/>
            <person name="Vanzee J.P."/>
            <person name="Verjovski-Almeida S."/>
            <person name="Werner D."/>
            <person name="White O.R."/>
            <person name="Wyder S."/>
            <person name="Zeng Q."/>
            <person name="Zhao Q."/>
            <person name="Zhao Y."/>
            <person name="Hill C.A."/>
            <person name="Raikhel A.S."/>
            <person name="Soares M.B."/>
            <person name="Knudson D.L."/>
            <person name="Lee N.H."/>
            <person name="Galagan J."/>
            <person name="Salzberg S.L."/>
            <person name="Paulsen I.T."/>
            <person name="Dimopoulos G."/>
            <person name="Collins F.H."/>
            <person name="Bruce B."/>
            <person name="Fraser-Liggett C.M."/>
            <person name="Severson D.W."/>
        </authorList>
    </citation>
    <scope>NUCLEOTIDE SEQUENCE [LARGE SCALE GENOMIC DNA]</scope>
    <source>
        <strain>LVPib12</strain>
    </source>
</reference>
<sequence>MSWRLSFRTNLLIYNVRRRNYATKAAGKPATRPNRWKSVIGLEVHAQIQTNSKLFSGAEVAFSSPINSCVSLFDASIPGTLPVLNRKCVELGVRTALALGCKVNSVSMFDRKHYFYADLPAGYQITQQRAPLARGGLLSFPVFVPGVSRKPYYKSARLHQLQLEQDSGKSLHDPVERKSLVDLNRAGVPLMELVFEPDLETGEEAAALVKELILILTRLGSCSCRMEEGALRVDANISVHKENTPLGTRTEVKNIGSVRAVAQAIEFEIERQIGILDGGGKIFNETRAWDAAGRQTIAMRDKEVVQDYRFMPEPNLPPLHVNVDGECDADVVVDAVHIGSSLPELPEETRRQIVEIHNLTPEMAIILVNDITLYNHFRTILDEPGKARSPKAVANFLINELLTILNKNKIDIEECRIPSTHLAEVTDMLEGNIINAYLARLIVQEALDGEGRESPALLAQRNDWLMITDTERIEAMCKDAIKNNPKVVEKYRKGKEKMLYALAGEIAKVSEQKVDMAKSVDLLKNMLK</sequence>
<gene>
    <name type="ORF">AAEL009908</name>
</gene>
<organism>
    <name type="scientific">Aedes aegypti</name>
    <name type="common">Yellowfever mosquito</name>
    <name type="synonym">Culex aegypti</name>
    <dbReference type="NCBI Taxonomy" id="7159"/>
    <lineage>
        <taxon>Eukaryota</taxon>
        <taxon>Metazoa</taxon>
        <taxon>Ecdysozoa</taxon>
        <taxon>Arthropoda</taxon>
        <taxon>Hexapoda</taxon>
        <taxon>Insecta</taxon>
        <taxon>Pterygota</taxon>
        <taxon>Neoptera</taxon>
        <taxon>Endopterygota</taxon>
        <taxon>Diptera</taxon>
        <taxon>Nematocera</taxon>
        <taxon>Culicoidea</taxon>
        <taxon>Culicidae</taxon>
        <taxon>Culicinae</taxon>
        <taxon>Aedini</taxon>
        <taxon>Aedes</taxon>
        <taxon>Stegomyia</taxon>
    </lineage>
</organism>
<accession>Q16UG2</accession>
<keyword id="KW-0067">ATP-binding</keyword>
<keyword id="KW-0436">Ligase</keyword>
<keyword id="KW-0496">Mitochondrion</keyword>
<keyword id="KW-0547">Nucleotide-binding</keyword>
<keyword id="KW-0648">Protein biosynthesis</keyword>
<keyword id="KW-1185">Reference proteome</keyword>
<keyword id="KW-0809">Transit peptide</keyword>
<evidence type="ECO:0000255" key="1">
    <source>
        <dbReference type="HAMAP-Rule" id="MF_03147"/>
    </source>
</evidence>
<protein>
    <recommendedName>
        <fullName evidence="1">Glutamyl-tRNA(Gln) amidotransferase subunit B, mitochondrial</fullName>
        <shortName evidence="1">Glu-AdT subunit B</shortName>
        <ecNumber evidence="1">6.3.5.-</ecNumber>
    </recommendedName>
</protein>
<proteinExistence type="inferred from homology"/>
<comment type="function">
    <text evidence="1">Allows the formation of correctly charged Gln-tRNA(Gln) through the transamidation of misacylated Glu-tRNA(Gln) in the mitochondria. The reaction takes place in the presence of glutamine and ATP through an activated gamma-phospho-Glu-tRNA(Gln).</text>
</comment>
<comment type="catalytic activity">
    <reaction evidence="1">
        <text>L-glutamyl-tRNA(Gln) + L-glutamine + ATP + H2O = L-glutaminyl-tRNA(Gln) + L-glutamate + ADP + phosphate + H(+)</text>
        <dbReference type="Rhea" id="RHEA:17521"/>
        <dbReference type="Rhea" id="RHEA-COMP:9681"/>
        <dbReference type="Rhea" id="RHEA-COMP:9684"/>
        <dbReference type="ChEBI" id="CHEBI:15377"/>
        <dbReference type="ChEBI" id="CHEBI:15378"/>
        <dbReference type="ChEBI" id="CHEBI:29985"/>
        <dbReference type="ChEBI" id="CHEBI:30616"/>
        <dbReference type="ChEBI" id="CHEBI:43474"/>
        <dbReference type="ChEBI" id="CHEBI:58359"/>
        <dbReference type="ChEBI" id="CHEBI:78520"/>
        <dbReference type="ChEBI" id="CHEBI:78521"/>
        <dbReference type="ChEBI" id="CHEBI:456216"/>
    </reaction>
</comment>
<comment type="subunit">
    <text evidence="1">Subunit of the heterotrimeric GatCAB amidotransferase (AdT) complex, composed of A, B and C subunits.</text>
</comment>
<comment type="subcellular location">
    <subcellularLocation>
        <location evidence="1">Mitochondrion</location>
    </subcellularLocation>
</comment>
<comment type="similarity">
    <text evidence="1">Belongs to the GatB/GatE family. GatB subfamily.</text>
</comment>